<keyword id="KW-0066">ATP synthesis</keyword>
<keyword id="KW-0997">Cell inner membrane</keyword>
<keyword id="KW-1003">Cell membrane</keyword>
<keyword id="KW-0139">CF(1)</keyword>
<keyword id="KW-0375">Hydrogen ion transport</keyword>
<keyword id="KW-0406">Ion transport</keyword>
<keyword id="KW-0472">Membrane</keyword>
<keyword id="KW-0813">Transport</keyword>
<organism>
    <name type="scientific">Burkholderia thailandensis (strain ATCC 700388 / DSM 13276 / CCUG 48851 / CIP 106301 / E264)</name>
    <dbReference type="NCBI Taxonomy" id="271848"/>
    <lineage>
        <taxon>Bacteria</taxon>
        <taxon>Pseudomonadati</taxon>
        <taxon>Pseudomonadota</taxon>
        <taxon>Betaproteobacteria</taxon>
        <taxon>Burkholderiales</taxon>
        <taxon>Burkholderiaceae</taxon>
        <taxon>Burkholderia</taxon>
        <taxon>pseudomallei group</taxon>
    </lineage>
</organism>
<name>ATPD_BURTA</name>
<proteinExistence type="inferred from homology"/>
<comment type="function">
    <text evidence="1">F(1)F(0) ATP synthase produces ATP from ADP in the presence of a proton or sodium gradient. F-type ATPases consist of two structural domains, F(1) containing the extramembraneous catalytic core and F(0) containing the membrane proton channel, linked together by a central stalk and a peripheral stalk. During catalysis, ATP synthesis in the catalytic domain of F(1) is coupled via a rotary mechanism of the central stalk subunits to proton translocation.</text>
</comment>
<comment type="function">
    <text evidence="1">This protein is part of the stalk that links CF(0) to CF(1). It either transmits conformational changes from CF(0) to CF(1) or is implicated in proton conduction.</text>
</comment>
<comment type="subunit">
    <text evidence="1">F-type ATPases have 2 components, F(1) - the catalytic core - and F(0) - the membrane proton channel. F(1) has five subunits: alpha(3), beta(3), gamma(1), delta(1), epsilon(1). F(0) has three main subunits: a(1), b(2) and c(10-14). The alpha and beta chains form an alternating ring which encloses part of the gamma chain. F(1) is attached to F(0) by a central stalk formed by the gamma and epsilon chains, while a peripheral stalk is formed by the delta and b chains.</text>
</comment>
<comment type="subcellular location">
    <subcellularLocation>
        <location evidence="1">Cell inner membrane</location>
        <topology evidence="1">Peripheral membrane protein</topology>
    </subcellularLocation>
</comment>
<comment type="similarity">
    <text evidence="1">Belongs to the ATPase delta chain family.</text>
</comment>
<dbReference type="EMBL" id="CP000086">
    <property type="protein sequence ID" value="ABC37489.1"/>
    <property type="molecule type" value="Genomic_DNA"/>
</dbReference>
<dbReference type="RefSeq" id="WP_009906703.1">
    <property type="nucleotide sequence ID" value="NZ_CP008785.1"/>
</dbReference>
<dbReference type="SMR" id="Q2STE6"/>
<dbReference type="GeneID" id="45122980"/>
<dbReference type="KEGG" id="bte:BTH_I3311"/>
<dbReference type="HOGENOM" id="CLU_085114_3_0_4"/>
<dbReference type="Proteomes" id="UP000001930">
    <property type="component" value="Chromosome I"/>
</dbReference>
<dbReference type="GO" id="GO:0005886">
    <property type="term" value="C:plasma membrane"/>
    <property type="evidence" value="ECO:0007669"/>
    <property type="project" value="UniProtKB-SubCell"/>
</dbReference>
<dbReference type="GO" id="GO:0045259">
    <property type="term" value="C:proton-transporting ATP synthase complex"/>
    <property type="evidence" value="ECO:0007669"/>
    <property type="project" value="UniProtKB-KW"/>
</dbReference>
<dbReference type="GO" id="GO:0046933">
    <property type="term" value="F:proton-transporting ATP synthase activity, rotational mechanism"/>
    <property type="evidence" value="ECO:0007669"/>
    <property type="project" value="UniProtKB-UniRule"/>
</dbReference>
<dbReference type="Gene3D" id="1.10.520.20">
    <property type="entry name" value="N-terminal domain of the delta subunit of the F1F0-ATP synthase"/>
    <property type="match status" value="1"/>
</dbReference>
<dbReference type="HAMAP" id="MF_01416">
    <property type="entry name" value="ATP_synth_delta_bact"/>
    <property type="match status" value="1"/>
</dbReference>
<dbReference type="InterPro" id="IPR026015">
    <property type="entry name" value="ATP_synth_OSCP/delta_N_sf"/>
</dbReference>
<dbReference type="InterPro" id="IPR000711">
    <property type="entry name" value="ATPase_OSCP/dsu"/>
</dbReference>
<dbReference type="NCBIfam" id="TIGR01145">
    <property type="entry name" value="ATP_synt_delta"/>
    <property type="match status" value="1"/>
</dbReference>
<dbReference type="NCBIfam" id="NF004402">
    <property type="entry name" value="PRK05758.2-2"/>
    <property type="match status" value="1"/>
</dbReference>
<dbReference type="PANTHER" id="PTHR11910">
    <property type="entry name" value="ATP SYNTHASE DELTA CHAIN"/>
    <property type="match status" value="1"/>
</dbReference>
<dbReference type="Pfam" id="PF00213">
    <property type="entry name" value="OSCP"/>
    <property type="match status" value="1"/>
</dbReference>
<dbReference type="PRINTS" id="PR00125">
    <property type="entry name" value="ATPASEDELTA"/>
</dbReference>
<dbReference type="SUPFAM" id="SSF47928">
    <property type="entry name" value="N-terminal domain of the delta subunit of the F1F0-ATP synthase"/>
    <property type="match status" value="1"/>
</dbReference>
<evidence type="ECO:0000255" key="1">
    <source>
        <dbReference type="HAMAP-Rule" id="MF_01416"/>
    </source>
</evidence>
<gene>
    <name evidence="1" type="primary">atpH</name>
    <name type="ordered locus">BTH_I3311</name>
</gene>
<protein>
    <recommendedName>
        <fullName evidence="1">ATP synthase subunit delta</fullName>
    </recommendedName>
    <alternativeName>
        <fullName evidence="1">ATP synthase F(1) sector subunit delta</fullName>
    </alternativeName>
    <alternativeName>
        <fullName evidence="1">F-type ATPase subunit delta</fullName>
        <shortName evidence="1">F-ATPase subunit delta</shortName>
    </alternativeName>
</protein>
<reference key="1">
    <citation type="journal article" date="2005" name="BMC Genomics">
        <title>Bacterial genome adaptation to niches: divergence of the potential virulence genes in three Burkholderia species of different survival strategies.</title>
        <authorList>
            <person name="Kim H.S."/>
            <person name="Schell M.A."/>
            <person name="Yu Y."/>
            <person name="Ulrich R.L."/>
            <person name="Sarria S.H."/>
            <person name="Nierman W.C."/>
            <person name="DeShazer D."/>
        </authorList>
    </citation>
    <scope>NUCLEOTIDE SEQUENCE [LARGE SCALE GENOMIC DNA]</scope>
    <source>
        <strain>ATCC 700388 / DSM 13276 / CCUG 48851 / CIP 106301 / E264</strain>
    </source>
</reference>
<accession>Q2STE6</accession>
<sequence>MAELATIARPYAEALFRVAEGGDISAWSTLVQELAQVAQLPEVLSVASSPKVSRAQVAELLLATLKSPLASGAQAKNFVQMLVDNHRIALLPEIAVQFEALKNAREGAADVQIVSAFPLEGAQLAELVTSLERKFKRKLKPAVEVDSSLIGGVRVTVGDEVLDTSVRARLAGMQAALTA</sequence>
<feature type="chain" id="PRO_0000370929" description="ATP synthase subunit delta">
    <location>
        <begin position="1"/>
        <end position="179"/>
    </location>
</feature>